<organism evidence="8">
    <name type="scientific">Tetrahymena thermophila (strain SB210)</name>
    <dbReference type="NCBI Taxonomy" id="312017"/>
    <lineage>
        <taxon>Eukaryota</taxon>
        <taxon>Sar</taxon>
        <taxon>Alveolata</taxon>
        <taxon>Ciliophora</taxon>
        <taxon>Intramacronucleata</taxon>
        <taxon>Oligohymenophorea</taxon>
        <taxon>Hymenostomatida</taxon>
        <taxon>Tetrahymenina</taxon>
        <taxon>Tetrahymenidae</taxon>
        <taxon>Tetrahymena</taxon>
    </lineage>
</organism>
<name>CRMP1_TETTS</name>
<protein>
    <recommendedName>
        <fullName evidence="5">Cysteine repeat modular protein 1</fullName>
        <shortName>TtCRMP1</shortName>
    </recommendedName>
    <alternativeName>
        <fullName evidence="7">EGF-like domain protein</fullName>
    </alternativeName>
</protein>
<reference evidence="8" key="1">
    <citation type="journal article" date="2006" name="PLoS Biol.">
        <title>Macronuclear genome sequence of the ciliate Tetrahymena thermophila, a model eukaryote.</title>
        <authorList>
            <person name="Eisen J.A."/>
            <person name="Coyne R.S."/>
            <person name="Wu M."/>
            <person name="Wu D."/>
            <person name="Thiagarajan M."/>
            <person name="Wortman J.R."/>
            <person name="Badger J.H."/>
            <person name="Ren Q."/>
            <person name="Amedeo P."/>
            <person name="Jones K.M."/>
            <person name="Tallon L.J."/>
            <person name="Delcher A.L."/>
            <person name="Salzberg S.L."/>
            <person name="Silva J.C."/>
            <person name="Haas B.J."/>
            <person name="Majoros W.H."/>
            <person name="Farzad M."/>
            <person name="Carlton J.M."/>
            <person name="Smith R.K. Jr."/>
            <person name="Garg J."/>
            <person name="Pearlman R.E."/>
            <person name="Karrer K.M."/>
            <person name="Sun L."/>
            <person name="Manning G."/>
            <person name="Elde N.C."/>
            <person name="Turkewitz A.P."/>
            <person name="Asai D.J."/>
            <person name="Wilkes D.E."/>
            <person name="Wang Y."/>
            <person name="Cai H."/>
            <person name="Collins K."/>
            <person name="Stewart B.A."/>
            <person name="Lee S.R."/>
            <person name="Wilamowska K."/>
            <person name="Weinberg Z."/>
            <person name="Ruzzo W.L."/>
            <person name="Wloga D."/>
            <person name="Gaertig J."/>
            <person name="Frankel J."/>
            <person name="Tsao C.-C."/>
            <person name="Gorovsky M.A."/>
            <person name="Keeling P.J."/>
            <person name="Waller R.F."/>
            <person name="Patron N.J."/>
            <person name="Cherry J.M."/>
            <person name="Stover N.A."/>
            <person name="Krieger C.J."/>
            <person name="del Toro C."/>
            <person name="Ryder H.F."/>
            <person name="Williamson S.C."/>
            <person name="Barbeau R.A."/>
            <person name="Hamilton E.P."/>
            <person name="Orias E."/>
        </authorList>
    </citation>
    <scope>NUCLEOTIDE SEQUENCE [LARGE SCALE GENOMIC DNA]</scope>
    <source>
        <strain evidence="8">SB210</strain>
    </source>
</reference>
<reference evidence="6" key="2">
    <citation type="journal article" date="2022" name="EMBO J.">
        <title>An apical membrane complex for triggering rhoptry exocytosis and invasion in Toxoplasma.</title>
        <authorList>
            <person name="Sparvoli D."/>
            <person name="Delabre J."/>
            <person name="Penarete-Vargas D.M."/>
            <person name="Kumar Mageswaran S."/>
            <person name="Tsypin L.M."/>
            <person name="Heckendorn J."/>
            <person name="Theveny L."/>
            <person name="Maynadier M."/>
            <person name="Mendonca Cova M."/>
            <person name="Berry-Sterkers L."/>
            <person name="Guerin A."/>
            <person name="Dubremetz J.F."/>
            <person name="Urbach S."/>
            <person name="Striepen B."/>
            <person name="Turkewitz A.P."/>
            <person name="Chang Y.W."/>
            <person name="Lebrun M."/>
        </authorList>
    </citation>
    <scope>FUNCTION</scope>
    <scope>DISRUPTION PHENOTYPE</scope>
</reference>
<sequence length="2448" mass="274110">MKIFIKDKTSTNLLNIFALYFSAICFIYCQNSCQPQNLKTDTNSQSLNLSSSTQMFMLYGWVSSTQQTSYNIYKIKDSVNDPVLSLDFNYSNQILTISGKNIQNIYQQNSLWFFFLTQIDQNGQQLTVYFSQPQIQRDYYNKFNLASQLTLQSSGQITLSISAANYKNLQFINGANFASSGYQNAQSFMFQDFQGYLYSFKLDQVYERSLLKEDVQQRMYPIYPTIDGQLNSATYSKAYQGIQLINQNITLSNGQFMRYYSTFQIQNVILTDPFFLGFYFRLTNLTQDDNNIFYIVSEGLQNPESISFVMIQNSLKIKMIDKQYLLYSNNLFTNQWYYLSLTWASIQVDSTQKFQSQIMVSIRQQYSQSAYKQLVQLAYPLSVQSTTYSIYFGYVPSQYNSQSTNYGIYGYISKILIGQGGSLISNTDEFKNTCKIQNQCDVLFLGSQGTSCQVCSSGYLNLSSMDSNTCIYTTCPSGYYFSNEFMQCQQCNQACLTCFSAGNDSCPQCLNGYYQYQQTCFKKCPDGFYISDQANFKCEKCNASCLSCTGPSFDQCLSCKSGFYLSSNTCQPCSQTCSQCTDMSTCQSCINGYYLDSNNSCISSCPNGQFANVQNQCQNCSIPNCYLCSSLTSCTQCNDKFYLSNNQCQSCDPTCTKCFGPTNQQCFACIQNKYLYNSACLSQSDCTALVGYFPNFQTSVCQACQGKCKTCTSSNTCSSCINGYYLQDSNCLPCPPQCSSCQSSTVCTSCYQNYYLDGNNNCSLTCPDGTFGNSQNICQTCIDGCQTCYGPTLLECYSCEQGFFFQAFQITNNSQAIQKGMCIACSQFCLSCTSRYYCTACKPLRFMKILPNLNQQLCVDDCGSYYLSDETDYTCKSCQSGCQTCSITVSNCQTCIQGYYNSGGRVCNQCLSKCLQCSQIGICTSCASGFYLQNNSCQNACLSGFPDSSQNVCVACHPTCVTCQGPLATDCLTCISGYYLNPANNICQICDPGCYSCSSKTNCSQCNNNYFLYSNYCYLACPSRTYPTQVNGISVCLPCTDPACLQCSNLQCITCMAGYFINQGACQVCDSSCNTCMNSPKICTSCDQTKKLVLSNTQCVSQCASNQYVDSVQNRCLPCFYSCSSCFGPNSNQCFSCQPNGFYLTNQTQCSICDISCLQCSGPGFDSCIQCAQGYYKLGDSVCVQSCPDGFFLNTSNNQCQSCNQVCFNCNGPQNSDCTSCAAGYYQSISNQNGIICSQCNSKCLTCNGPFSSNCILCNSGYVKYNSQCQTFCPQGYRSIKGVCIQCPSNCGYCVNQSLNSNSQVCTQCLQNYILNQLDNTCVQVCPNGTFQVFIASNQQAPDISSYYCQSCDQGCLSCSQSSSNCTQCKTGYIFHETVNQCVYGGTCLNGFILYIDSQTQNQYCKVCKINCVSCIQQFFYYQENCYSSCPVGTVQVSQSNICVLNLLPQLTILTNPAQVTFKEDVTIVTQIQSPIQITSMVWSLISPSPTSDLGSKFLQNLILNNITNLYIPLSNISPLSLYQIQFTIANSKGSATQTISLNTQLMLTPGTVNCQPSSNIFSGTTQIQLTLLNFIHPSPLFYDYILSPISNTYSFQRINNMTATNQDLLSLDNFFVVFITTNSKQLNLTTYQVRQQQSINVVVNVFNQYVFYQTSSQVQFLKGSAFTYNTTDINSDLTKFDTLVASMIANTNQLTQLSTFIQDIRTLKEVLYNYLQNAYSQSQQQIYLQKSFFQVINSDISCSLNLCMNSGKCVPNSIFCSCPSAFTGPKCQIDVKRSQQLSQYLEGALSLIYQNMASNISNDGLVNILMDISFFRDMLDKAIYPVYFQILSKYFSQKLTTVITNNGNVSFLSSKTLSYCFIQIFENLNPIIINYNSTQLPDKSTFLQLLTNIKDLSIITIITSQNSPLNVASPYYFYASIGVITSSMFPQILDQYQNYYNTSNSASFSSSLLMRNLQLQEQTSQQTDPSQNNVNVGQEFGTGIDLLKSLFNFPVIEYQSNRHFIYLPQSTITSFSNLRIVVAEIFDIASALPYSSQLLSQQFLLATGFFTVIISQSQQIIPIINNPNPITIIIPKMVSYPSLNYVDPKLPVYNCLHYDQNKDQFETNSCFFQRENSTHIACSCYTIKSYITVQINKQNIQSLPVYNDIILSNNFTFDSYVTEKLRVYKEVNKFTDANTTFSVEQEKFQELMILKNYYGLYIMIIISLGIGAAFLGYSAIKSKYLDEKINMKDHSRIYFLYYFPIISFLVGPTNQFVNNYTRAVTSLTIIASHFAFSSIYVQILPFDMQSSTQQILTSIITVSSTSVCIYWTIGVYHMIVVGLNNNLNEEKNTGSTWKIVEGFKYSFGVTMIGLVLAVLALISISVFIGLCDDDQFNIWQDIIKAVFLIDLIADAIVVFILIIVGYDSTIGSFFALRGYGITIQSDNKVKHQKLDKEVKLDEKKNTK</sequence>
<feature type="chain" id="PRO_0000461863" description="Cysteine repeat modular protein 1">
    <location>
        <begin position="1"/>
        <end position="2448"/>
    </location>
</feature>
<feature type="transmembrane region" description="Helical" evidence="1">
    <location>
        <begin position="9"/>
        <end position="29"/>
    </location>
</feature>
<feature type="transmembrane region" description="Helical" evidence="1">
    <location>
        <begin position="2201"/>
        <end position="2221"/>
    </location>
</feature>
<feature type="transmembrane region" description="Helical" evidence="1">
    <location>
        <begin position="2238"/>
        <end position="2258"/>
    </location>
</feature>
<feature type="transmembrane region" description="Helical" evidence="1">
    <location>
        <begin position="2267"/>
        <end position="2287"/>
    </location>
</feature>
<feature type="transmembrane region" description="Helical" evidence="1">
    <location>
        <begin position="2296"/>
        <end position="2316"/>
    </location>
</feature>
<feature type="transmembrane region" description="Helical" evidence="1">
    <location>
        <begin position="2352"/>
        <end position="2372"/>
    </location>
</feature>
<feature type="transmembrane region" description="Helical" evidence="1">
    <location>
        <begin position="2386"/>
        <end position="2406"/>
    </location>
</feature>
<feature type="repeat" description="FU 1" evidence="1">
    <location>
        <begin position="431"/>
        <end position="481"/>
    </location>
</feature>
<feature type="repeat" description="FU 2" evidence="1">
    <location>
        <begin position="485"/>
        <end position="530"/>
    </location>
</feature>
<feature type="repeat" description="FU 3" evidence="1">
    <location>
        <begin position="535"/>
        <end position="566"/>
    </location>
</feature>
<feature type="repeat" description="FU 4" evidence="1">
    <location>
        <begin position="567"/>
        <end position="611"/>
    </location>
</feature>
<feature type="repeat" description="FU 5" evidence="1">
    <location>
        <begin position="645"/>
        <end position="694"/>
    </location>
</feature>
<feature type="repeat" description="FU 6" evidence="1">
    <location>
        <begin position="698"/>
        <end position="727"/>
    </location>
</feature>
<feature type="repeat" description="FU 7" evidence="1">
    <location>
        <begin position="728"/>
        <end position="772"/>
    </location>
</feature>
<feature type="repeat" description="FU 8" evidence="1">
    <location>
        <begin position="775"/>
        <end position="813"/>
    </location>
</feature>
<feature type="repeat" description="FU 9" evidence="1">
    <location>
        <begin position="819"/>
        <end position="868"/>
    </location>
</feature>
<feature type="repeat" description="FU 10" evidence="1">
    <location>
        <begin position="904"/>
        <end position="947"/>
    </location>
</feature>
<feature type="repeat" description="FU 11" evidence="1">
    <location>
        <begin position="950"/>
        <end position="983"/>
    </location>
</feature>
<feature type="repeat" description="FU 12" evidence="1">
    <location>
        <begin position="984"/>
        <end position="1027"/>
    </location>
</feature>
<feature type="repeat" description="FU 13" evidence="1">
    <location>
        <begin position="1063"/>
        <end position="1109"/>
    </location>
</feature>
<feature type="repeat" description="FU 14" evidence="1">
    <location>
        <begin position="1113"/>
        <end position="1144"/>
    </location>
</feature>
<feature type="repeat" description="FU 15" evidence="1">
    <location>
        <begin position="1147"/>
        <end position="1193"/>
    </location>
</feature>
<feature type="repeat" description="FU 16" evidence="1">
    <location>
        <begin position="1197"/>
        <end position="1232"/>
    </location>
</feature>
<feature type="repeat" description="FU 17" evidence="1">
    <location>
        <begin position="1234"/>
        <end position="1279"/>
    </location>
</feature>
<feature type="repeat" description="FU 18" evidence="1">
    <location>
        <begin position="1281"/>
        <end position="1332"/>
    </location>
</feature>
<feature type="repeat" description="FU 19" evidence="1">
    <location>
        <begin position="1346"/>
        <end position="1394"/>
    </location>
</feature>
<feature type="repeat" description="FU 20" evidence="1">
    <location>
        <begin position="1402"/>
        <end position="1436"/>
    </location>
</feature>
<feature type="domain" description="EGF-like" evidence="2">
    <location>
        <begin position="1739"/>
        <end position="1773"/>
    </location>
</feature>
<feature type="glycosylation site" description="N-linked (GlcNAc...) asparagine" evidence="3">
    <location>
        <position position="48"/>
    </location>
</feature>
<feature type="glycosylation site" description="N-linked (GlcNAc...) asparagine" evidence="3">
    <location>
        <position position="89"/>
    </location>
</feature>
<feature type="glycosylation site" description="N-linked (GlcNAc...) asparagine" evidence="3">
    <location>
        <position position="248"/>
    </location>
</feature>
<feature type="glycosylation site" description="N-linked (GlcNAc...) asparagine" evidence="3">
    <location>
        <position position="284"/>
    </location>
</feature>
<feature type="glycosylation site" description="N-linked (GlcNAc...) asparagine" evidence="3">
    <location>
        <position position="461"/>
    </location>
</feature>
<feature type="glycosylation site" description="N-linked (GlcNAc...) asparagine" evidence="3">
    <location>
        <position position="503"/>
    </location>
</feature>
<feature type="glycosylation site" description="N-linked (GlcNAc...) asparagine" evidence="3">
    <location>
        <position position="542"/>
    </location>
</feature>
<feature type="glycosylation site" description="N-linked (GlcNAc...) asparagine" evidence="3">
    <location>
        <position position="598"/>
    </location>
</feature>
<feature type="glycosylation site" description="N-linked (GlcNAc...) asparagine" evidence="3">
    <location>
        <position position="619"/>
    </location>
</feature>
<feature type="glycosylation site" description="N-linked (GlcNAc...) asparagine" evidence="3">
    <location>
        <position position="761"/>
    </location>
</feature>
<feature type="glycosylation site" description="N-linked (GlcNAc...) asparagine" evidence="3">
    <location>
        <position position="812"/>
    </location>
</feature>
<feature type="glycosylation site" description="N-linked (GlcNAc...) asparagine" evidence="3">
    <location>
        <position position="934"/>
    </location>
</feature>
<feature type="glycosylation site" description="N-linked (GlcNAc...) asparagine" evidence="3">
    <location>
        <position position="1002"/>
    </location>
</feature>
<feature type="glycosylation site" description="N-linked (GlcNAc...) asparagine" evidence="3">
    <location>
        <position position="1146"/>
    </location>
</feature>
<feature type="glycosylation site" description="N-linked (GlcNAc...) asparagine" evidence="3">
    <location>
        <position position="1194"/>
    </location>
</feature>
<feature type="glycosylation site" description="N-linked (GlcNAc...) asparagine" evidence="3">
    <location>
        <position position="1296"/>
    </location>
</feature>
<feature type="glycosylation site" description="N-linked (GlcNAc...) asparagine" evidence="3">
    <location>
        <position position="1328"/>
    </location>
</feature>
<feature type="glycosylation site" description="N-linked (GlcNAc...) asparagine" evidence="3">
    <location>
        <position position="1365"/>
    </location>
</feature>
<feature type="glycosylation site" description="N-linked (GlcNAc...) asparagine" evidence="3">
    <location>
        <position position="1506"/>
    </location>
</feature>
<feature type="glycosylation site" description="N-linked (GlcNAc...) asparagine" evidence="3">
    <location>
        <position position="1601"/>
    </location>
</feature>
<feature type="glycosylation site" description="N-linked (GlcNAc...) asparagine" evidence="3">
    <location>
        <position position="1628"/>
    </location>
</feature>
<feature type="glycosylation site" description="N-linked (GlcNAc...) asparagine" evidence="3">
    <location>
        <position position="1670"/>
    </location>
</feature>
<feature type="glycosylation site" description="N-linked (GlcNAc...) asparagine" evidence="3">
    <location>
        <position position="1800"/>
    </location>
</feature>
<feature type="glycosylation site" description="N-linked (GlcNAc...) asparagine" evidence="3">
    <location>
        <position position="1849"/>
    </location>
</feature>
<feature type="glycosylation site" description="N-linked (GlcNAc...) asparagine" evidence="3">
    <location>
        <position position="1877"/>
    </location>
</feature>
<feature type="glycosylation site" description="N-linked (GlcNAc...) asparagine" evidence="3">
    <location>
        <position position="1942"/>
    </location>
</feature>
<feature type="glycosylation site" description="N-linked (GlcNAc...) asparagine" evidence="3">
    <location>
        <position position="2117"/>
    </location>
</feature>
<feature type="glycosylation site" description="N-linked (GlcNAc...) asparagine" evidence="3">
    <location>
        <position position="2155"/>
    </location>
</feature>
<feature type="glycosylation site" description="N-linked (GlcNAc...) asparagine" evidence="3">
    <location>
        <position position="2179"/>
    </location>
</feature>
<feature type="glycosylation site" description="N-linked (GlcNAc...) asparagine" evidence="3">
    <location>
        <position position="2260"/>
    </location>
</feature>
<feature type="disulfide bond" evidence="2">
    <location>
        <begin position="1743"/>
        <end position="1754"/>
    </location>
</feature>
<feature type="disulfide bond" evidence="2">
    <location>
        <begin position="1748"/>
        <end position="1761"/>
    </location>
</feature>
<feature type="disulfide bond" evidence="2">
    <location>
        <begin position="1763"/>
        <end position="1772"/>
    </location>
</feature>
<accession>I7MD46</accession>
<keyword id="KW-1015">Disulfide bond</keyword>
<keyword id="KW-0245">EGF-like domain</keyword>
<keyword id="KW-0268">Exocytosis</keyword>
<keyword id="KW-0325">Glycoprotein</keyword>
<keyword id="KW-0472">Membrane</keyword>
<keyword id="KW-1185">Reference proteome</keyword>
<keyword id="KW-0677">Repeat</keyword>
<keyword id="KW-0812">Transmembrane</keyword>
<keyword id="KW-1133">Transmembrane helix</keyword>
<comment type="function">
    <text evidence="4">Required for mucocyst secretion.</text>
</comment>
<comment type="subcellular location">
    <subcellularLocation>
        <location evidence="1">Membrane</location>
        <topology evidence="1">Multi-pass membrane protein</topology>
    </subcellularLocation>
</comment>
<comment type="disruption phenotype">
    <text evidence="4">Gene knockout results in impaired in mucocyst discharge (PubMed:36245278). No significant effect on the mucocyst biogenesis (PubMed:36245278). No significant effect on mucocyst secretory apparatus formation (PubMed:36245278).</text>
</comment>
<proteinExistence type="inferred from homology"/>
<dbReference type="EMBL" id="GG662665">
    <property type="protein sequence ID" value="EAR85481.2"/>
    <property type="molecule type" value="Genomic_DNA"/>
</dbReference>
<dbReference type="RefSeq" id="XP_001033144.2">
    <property type="nucleotide sequence ID" value="XM_001033144.3"/>
</dbReference>
<dbReference type="GeneID" id="7830659"/>
<dbReference type="KEGG" id="tet:TTHERM_00442310"/>
<dbReference type="eggNOG" id="KOG3525">
    <property type="taxonomic scope" value="Eukaryota"/>
</dbReference>
<dbReference type="InParanoid" id="I7MD46"/>
<dbReference type="OrthoDB" id="10035969at2759"/>
<dbReference type="Proteomes" id="UP000009168">
    <property type="component" value="Unassembled WGS sequence"/>
</dbReference>
<dbReference type="GO" id="GO:0016020">
    <property type="term" value="C:membrane"/>
    <property type="evidence" value="ECO:0007669"/>
    <property type="project" value="UniProtKB-SubCell"/>
</dbReference>
<dbReference type="GO" id="GO:0006887">
    <property type="term" value="P:exocytosis"/>
    <property type="evidence" value="ECO:0007669"/>
    <property type="project" value="UniProtKB-KW"/>
</dbReference>
<dbReference type="CDD" id="cd00064">
    <property type="entry name" value="FU"/>
    <property type="match status" value="7"/>
</dbReference>
<dbReference type="Gene3D" id="2.10.220.10">
    <property type="entry name" value="Hormone Receptor, Insulin-like Growth Factor Receptor 1, Chain A, domain 2"/>
    <property type="match status" value="13"/>
</dbReference>
<dbReference type="InterPro" id="IPR000742">
    <property type="entry name" value="EGF-like_dom"/>
</dbReference>
<dbReference type="InterPro" id="IPR006212">
    <property type="entry name" value="Furin_repeat"/>
</dbReference>
<dbReference type="InterPro" id="IPR009030">
    <property type="entry name" value="Growth_fac_rcpt_cys_sf"/>
</dbReference>
<dbReference type="PANTHER" id="PTHR15332">
    <property type="entry name" value="PROPROTEIN CONVERTASE SUBTILISIN_KEXIN TYPE 5-LIKE"/>
    <property type="match status" value="1"/>
</dbReference>
<dbReference type="PANTHER" id="PTHR15332:SF175">
    <property type="entry name" value="PROPROTEIN CONVERTASE SUBTILISIN_KEXIN TYPE 5-LIKE"/>
    <property type="match status" value="1"/>
</dbReference>
<dbReference type="SMART" id="SM00181">
    <property type="entry name" value="EGF"/>
    <property type="match status" value="15"/>
</dbReference>
<dbReference type="SMART" id="SM01411">
    <property type="entry name" value="Ephrin_rec_like"/>
    <property type="match status" value="7"/>
</dbReference>
<dbReference type="SMART" id="SM00261">
    <property type="entry name" value="FU"/>
    <property type="match status" value="20"/>
</dbReference>
<dbReference type="SUPFAM" id="SSF57196">
    <property type="entry name" value="EGF/Laminin"/>
    <property type="match status" value="1"/>
</dbReference>
<dbReference type="SUPFAM" id="SSF57184">
    <property type="entry name" value="Growth factor receptor domain"/>
    <property type="match status" value="9"/>
</dbReference>
<dbReference type="PROSITE" id="PS00022">
    <property type="entry name" value="EGF_1"/>
    <property type="match status" value="1"/>
</dbReference>
<dbReference type="PROSITE" id="PS50026">
    <property type="entry name" value="EGF_3"/>
    <property type="match status" value="1"/>
</dbReference>
<gene>
    <name evidence="7" type="ORF">TTHERM_00442310</name>
</gene>
<evidence type="ECO:0000255" key="1"/>
<evidence type="ECO:0000255" key="2">
    <source>
        <dbReference type="PROSITE-ProRule" id="PRU00076"/>
    </source>
</evidence>
<evidence type="ECO:0000255" key="3">
    <source>
        <dbReference type="PROSITE-ProRule" id="PRU00498"/>
    </source>
</evidence>
<evidence type="ECO:0000269" key="4">
    <source>
    </source>
</evidence>
<evidence type="ECO:0000303" key="5">
    <source>
    </source>
</evidence>
<evidence type="ECO:0000305" key="6"/>
<evidence type="ECO:0000312" key="7">
    <source>
        <dbReference type="EMBL" id="EAR85481.2"/>
    </source>
</evidence>
<evidence type="ECO:0000312" key="8">
    <source>
        <dbReference type="Proteomes" id="UP000009168"/>
    </source>
</evidence>